<accession>P23543</accession>
<accession>Q7M412</accession>
<sequence>VKVPAPFAWNEDFATSYKFIDLEHRTLFNGLFALSEFNTRDQLLACKEVFVMHFRDEQGQMEKANYEHFEEHKGIHEGFLEKMGHWKAPVAQKDIRFGMEWLVNHIPAEDFKYKGKL</sequence>
<comment type="function">
    <text>Hemerythrin is a respiratory protein in blood cells of certain marine worms. The oxygen-binding site in each chain contains two iron atoms.</text>
</comment>
<comment type="subunit">
    <text>Octamer composed of two types of chains: alpha and beta.</text>
</comment>
<comment type="similarity">
    <text evidence="2">Belongs to the hemerythrin family.</text>
</comment>
<reference key="1">
    <citation type="journal article" date="1994" name="Biochim. Biophys. Acta">
        <title>Amino-acid sequences of the alpha- and beta-subunits of hemerythrin from Lingula reevii.</title>
        <authorList>
            <person name="Negri A."/>
            <person name="Tedeschi G."/>
            <person name="Bonomi F."/>
            <person name="Zhang J.-H."/>
            <person name="Kurtz D.M. Jr."/>
        </authorList>
    </citation>
    <scope>PROTEIN SEQUENCE</scope>
</reference>
<reference key="2">
    <citation type="journal article" date="1991" name="Biochemistry">
        <title>Two distinct subunits of hemerythrin from the brachiopod Lingula reevii: an apparent requirement for cooperativity in O2 binding.</title>
        <authorList>
            <person name="Zhang J.-H."/>
            <person name="Kurtz D.M. Jr."/>
        </authorList>
    </citation>
    <scope>PROTEIN SEQUENCE OF 1-24</scope>
</reference>
<keyword id="KW-0903">Direct protein sequencing</keyword>
<keyword id="KW-0408">Iron</keyword>
<keyword id="KW-0479">Metal-binding</keyword>
<keyword id="KW-0561">Oxygen transport</keyword>
<keyword id="KW-0813">Transport</keyword>
<organism>
    <name type="scientific">Lingula reevii</name>
    <name type="common">Inarticulated brachiopod</name>
    <dbReference type="NCBI Taxonomy" id="2792136"/>
    <lineage>
        <taxon>Eukaryota</taxon>
        <taxon>Metazoa</taxon>
        <taxon>Spiralia</taxon>
        <taxon>Lophotrochozoa</taxon>
        <taxon>Brachiopoda</taxon>
        <taxon>Linguliformea</taxon>
        <taxon>Lingulata</taxon>
        <taxon>Lingulida</taxon>
        <taxon>Linguloidea</taxon>
        <taxon>Lingulidae</taxon>
        <taxon>Lingula</taxon>
    </lineage>
</organism>
<proteinExistence type="evidence at protein level"/>
<protein>
    <recommendedName>
        <fullName>Hemerythrin subunit alpha</fullName>
    </recommendedName>
</protein>
<name>HEMTA_LINRE</name>
<feature type="chain" id="PRO_0000191828" description="Hemerythrin subunit alpha">
    <location>
        <begin position="1"/>
        <end position="117"/>
    </location>
</feature>
<feature type="binding site" evidence="1">
    <location>
        <position position="24"/>
    </location>
    <ligand>
        <name>Fe cation</name>
        <dbReference type="ChEBI" id="CHEBI:24875"/>
        <label>1</label>
    </ligand>
</feature>
<feature type="binding site" evidence="1">
    <location>
        <position position="53"/>
    </location>
    <ligand>
        <name>Fe cation</name>
        <dbReference type="ChEBI" id="CHEBI:24875"/>
        <label>1</label>
    </ligand>
</feature>
<feature type="binding site" evidence="1">
    <location>
        <position position="57"/>
    </location>
    <ligand>
        <name>Fe cation</name>
        <dbReference type="ChEBI" id="CHEBI:24875"/>
        <label>1</label>
    </ligand>
</feature>
<feature type="binding site" evidence="1">
    <location>
        <position position="57"/>
    </location>
    <ligand>
        <name>Fe cation</name>
        <dbReference type="ChEBI" id="CHEBI:24875"/>
        <label>2</label>
    </ligand>
</feature>
<feature type="binding site" evidence="1">
    <location>
        <position position="72"/>
    </location>
    <ligand>
        <name>Fe cation</name>
        <dbReference type="ChEBI" id="CHEBI:24875"/>
        <label>2</label>
    </ligand>
</feature>
<feature type="binding site" evidence="1">
    <location>
        <position position="76"/>
    </location>
    <ligand>
        <name>Fe cation</name>
        <dbReference type="ChEBI" id="CHEBI:24875"/>
        <label>2</label>
    </ligand>
</feature>
<feature type="binding site" evidence="1">
    <location>
        <position position="105"/>
    </location>
    <ligand>
        <name>Fe cation</name>
        <dbReference type="ChEBI" id="CHEBI:24875"/>
        <label>2</label>
    </ligand>
</feature>
<feature type="binding site" evidence="1">
    <location>
        <position position="110"/>
    </location>
    <ligand>
        <name>Fe cation</name>
        <dbReference type="ChEBI" id="CHEBI:24875"/>
        <label>1</label>
    </ligand>
</feature>
<feature type="binding site" evidence="1">
    <location>
        <position position="110"/>
    </location>
    <ligand>
        <name>Fe cation</name>
        <dbReference type="ChEBI" id="CHEBI:24875"/>
        <label>2</label>
    </ligand>
</feature>
<evidence type="ECO:0000250" key="1">
    <source>
        <dbReference type="UniProtKB" id="P02244"/>
    </source>
</evidence>
<evidence type="ECO:0000305" key="2"/>
<dbReference type="PIR" id="S50177">
    <property type="entry name" value="S50177"/>
</dbReference>
<dbReference type="SMR" id="P23543"/>
<dbReference type="GO" id="GO:0005506">
    <property type="term" value="F:iron ion binding"/>
    <property type="evidence" value="ECO:0007669"/>
    <property type="project" value="InterPro"/>
</dbReference>
<dbReference type="GO" id="GO:0005344">
    <property type="term" value="F:oxygen carrier activity"/>
    <property type="evidence" value="ECO:0007669"/>
    <property type="project" value="UniProtKB-KW"/>
</dbReference>
<dbReference type="CDD" id="cd12107">
    <property type="entry name" value="Hemerythrin"/>
    <property type="match status" value="1"/>
</dbReference>
<dbReference type="Gene3D" id="1.20.120.50">
    <property type="entry name" value="Hemerythrin-like"/>
    <property type="match status" value="1"/>
</dbReference>
<dbReference type="InterPro" id="IPR002063">
    <property type="entry name" value="Haemerythrin"/>
</dbReference>
<dbReference type="InterPro" id="IPR016131">
    <property type="entry name" value="Haemerythrin_Fe_BS"/>
</dbReference>
<dbReference type="InterPro" id="IPR050669">
    <property type="entry name" value="Hemerythrin"/>
</dbReference>
<dbReference type="InterPro" id="IPR012312">
    <property type="entry name" value="Hemerythrin-like"/>
</dbReference>
<dbReference type="InterPro" id="IPR035938">
    <property type="entry name" value="Hemerythrin-like_sf"/>
</dbReference>
<dbReference type="InterPro" id="IPR012827">
    <property type="entry name" value="Hemerythrin_metal-bd"/>
</dbReference>
<dbReference type="NCBIfam" id="TIGR02481">
    <property type="entry name" value="hemeryth_dom"/>
    <property type="match status" value="1"/>
</dbReference>
<dbReference type="NCBIfam" id="TIGR00058">
    <property type="entry name" value="Hemerythrin"/>
    <property type="match status" value="1"/>
</dbReference>
<dbReference type="PANTHER" id="PTHR37164">
    <property type="entry name" value="BACTERIOHEMERYTHRIN"/>
    <property type="match status" value="1"/>
</dbReference>
<dbReference type="PANTHER" id="PTHR37164:SF1">
    <property type="entry name" value="BACTERIOHEMERYTHRIN"/>
    <property type="match status" value="1"/>
</dbReference>
<dbReference type="Pfam" id="PF01814">
    <property type="entry name" value="Hemerythrin"/>
    <property type="match status" value="1"/>
</dbReference>
<dbReference type="PIRSF" id="PIRSF002033">
    <property type="entry name" value="Hemerythrin"/>
    <property type="match status" value="1"/>
</dbReference>
<dbReference type="PRINTS" id="PR00186">
    <property type="entry name" value="HEMERYTHRIN"/>
</dbReference>
<dbReference type="SUPFAM" id="SSF47188">
    <property type="entry name" value="Hemerythrin-like"/>
    <property type="match status" value="1"/>
</dbReference>
<dbReference type="PROSITE" id="PS00550">
    <property type="entry name" value="HEMERYTHRINS"/>
    <property type="match status" value="1"/>
</dbReference>